<comment type="function">
    <text evidence="1">Organic hydroperoxide detoxification protein. Confers increased resistance to tert-butyl hydroperoxide killing (By similarity).</text>
</comment>
<comment type="similarity">
    <text evidence="2">Belongs to the OsmC/Ohr family.</text>
</comment>
<dbReference type="EMBL" id="AE008923">
    <property type="protein sequence ID" value="AAM35174.1"/>
    <property type="molecule type" value="Genomic_DNA"/>
</dbReference>
<dbReference type="RefSeq" id="WP_003488682.1">
    <property type="nucleotide sequence ID" value="NC_003919.1"/>
</dbReference>
<dbReference type="SMR" id="P0A0V4"/>
<dbReference type="KEGG" id="xac:XAC0282"/>
<dbReference type="eggNOG" id="COG1764">
    <property type="taxonomic scope" value="Bacteria"/>
</dbReference>
<dbReference type="HOGENOM" id="CLU_106355_2_1_6"/>
<dbReference type="Proteomes" id="UP000000576">
    <property type="component" value="Chromosome"/>
</dbReference>
<dbReference type="GO" id="GO:0006979">
    <property type="term" value="P:response to oxidative stress"/>
    <property type="evidence" value="ECO:0007669"/>
    <property type="project" value="InterPro"/>
</dbReference>
<dbReference type="Gene3D" id="2.20.25.10">
    <property type="match status" value="1"/>
</dbReference>
<dbReference type="Gene3D" id="3.30.300.20">
    <property type="match status" value="1"/>
</dbReference>
<dbReference type="InterPro" id="IPR015946">
    <property type="entry name" value="KH_dom-like_a/b"/>
</dbReference>
<dbReference type="InterPro" id="IPR019953">
    <property type="entry name" value="OHR"/>
</dbReference>
<dbReference type="InterPro" id="IPR003718">
    <property type="entry name" value="OsmC/Ohr_fam"/>
</dbReference>
<dbReference type="InterPro" id="IPR036102">
    <property type="entry name" value="OsmC/Ohrsf"/>
</dbReference>
<dbReference type="NCBIfam" id="TIGR03561">
    <property type="entry name" value="organ_hyd_perox"/>
    <property type="match status" value="1"/>
</dbReference>
<dbReference type="PANTHER" id="PTHR33797">
    <property type="entry name" value="ORGANIC HYDROPEROXIDE RESISTANCE PROTEIN-LIKE"/>
    <property type="match status" value="1"/>
</dbReference>
<dbReference type="PANTHER" id="PTHR33797:SF2">
    <property type="entry name" value="ORGANIC HYDROPEROXIDE RESISTANCE PROTEIN-LIKE"/>
    <property type="match status" value="1"/>
</dbReference>
<dbReference type="Pfam" id="PF02566">
    <property type="entry name" value="OsmC"/>
    <property type="match status" value="1"/>
</dbReference>
<dbReference type="SUPFAM" id="SSF82784">
    <property type="entry name" value="OsmC-like"/>
    <property type="match status" value="1"/>
</dbReference>
<protein>
    <recommendedName>
        <fullName>Organic hydroperoxide resistance protein</fullName>
    </recommendedName>
</protein>
<proteinExistence type="inferred from homology"/>
<sequence>MASPEKVLYTAHATATGGREGRAVSSDKALDAKLSTPRELGGAGGDGTNPEQLFAAGYAACFIGAMKAVAAQDKLKLPGEVSIDSSVGIGQIPGGFGIVVELRIAVPGMDKAELQTLVDKAHQVCPYSNATRGNIDVTLTLA</sequence>
<accession>P0A0V4</accession>
<accession>O68390</accession>
<name>OHR_XANAC</name>
<organism>
    <name type="scientific">Xanthomonas axonopodis pv. citri (strain 306)</name>
    <dbReference type="NCBI Taxonomy" id="190486"/>
    <lineage>
        <taxon>Bacteria</taxon>
        <taxon>Pseudomonadati</taxon>
        <taxon>Pseudomonadota</taxon>
        <taxon>Gammaproteobacteria</taxon>
        <taxon>Lysobacterales</taxon>
        <taxon>Lysobacteraceae</taxon>
        <taxon>Xanthomonas</taxon>
    </lineage>
</organism>
<gene>
    <name type="primary">ohr</name>
    <name type="ordered locus">XAC0282</name>
</gene>
<feature type="chain" id="PRO_0000172725" description="Organic hydroperoxide resistance protein">
    <location>
        <begin position="1"/>
        <end position="142"/>
    </location>
</feature>
<reference key="1">
    <citation type="journal article" date="2002" name="Nature">
        <title>Comparison of the genomes of two Xanthomonas pathogens with differing host specificities.</title>
        <authorList>
            <person name="da Silva A.C.R."/>
            <person name="Ferro J.A."/>
            <person name="Reinach F.C."/>
            <person name="Farah C.S."/>
            <person name="Furlan L.R."/>
            <person name="Quaggio R.B."/>
            <person name="Monteiro-Vitorello C.B."/>
            <person name="Van Sluys M.A."/>
            <person name="Almeida N.F. Jr."/>
            <person name="Alves L.M.C."/>
            <person name="do Amaral A.M."/>
            <person name="Bertolini M.C."/>
            <person name="Camargo L.E.A."/>
            <person name="Camarotte G."/>
            <person name="Cannavan F."/>
            <person name="Cardozo J."/>
            <person name="Chambergo F."/>
            <person name="Ciapina L.P."/>
            <person name="Cicarelli R.M.B."/>
            <person name="Coutinho L.L."/>
            <person name="Cursino-Santos J.R."/>
            <person name="El-Dorry H."/>
            <person name="Faria J.B."/>
            <person name="Ferreira A.J.S."/>
            <person name="Ferreira R.C.C."/>
            <person name="Ferro M.I.T."/>
            <person name="Formighieri E.F."/>
            <person name="Franco M.C."/>
            <person name="Greggio C.C."/>
            <person name="Gruber A."/>
            <person name="Katsuyama A.M."/>
            <person name="Kishi L.T."/>
            <person name="Leite R.P."/>
            <person name="Lemos E.G.M."/>
            <person name="Lemos M.V.F."/>
            <person name="Locali E.C."/>
            <person name="Machado M.A."/>
            <person name="Madeira A.M.B.N."/>
            <person name="Martinez-Rossi N.M."/>
            <person name="Martins E.C."/>
            <person name="Meidanis J."/>
            <person name="Menck C.F.M."/>
            <person name="Miyaki C.Y."/>
            <person name="Moon D.H."/>
            <person name="Moreira L.M."/>
            <person name="Novo M.T.M."/>
            <person name="Okura V.K."/>
            <person name="Oliveira M.C."/>
            <person name="Oliveira V.R."/>
            <person name="Pereira H.A."/>
            <person name="Rossi A."/>
            <person name="Sena J.A.D."/>
            <person name="Silva C."/>
            <person name="de Souza R.F."/>
            <person name="Spinola L.A.F."/>
            <person name="Takita M.A."/>
            <person name="Tamura R.E."/>
            <person name="Teixeira E.C."/>
            <person name="Tezza R.I.D."/>
            <person name="Trindade dos Santos M."/>
            <person name="Truffi D."/>
            <person name="Tsai S.M."/>
            <person name="White F.F."/>
            <person name="Setubal J.C."/>
            <person name="Kitajima J.P."/>
        </authorList>
    </citation>
    <scope>NUCLEOTIDE SEQUENCE [LARGE SCALE GENOMIC DNA]</scope>
    <source>
        <strain>306</strain>
    </source>
</reference>
<evidence type="ECO:0000250" key="1"/>
<evidence type="ECO:0000305" key="2"/>